<dbReference type="EMBL" id="AB015468">
    <property type="protein sequence ID" value="BAB10696.1"/>
    <property type="molecule type" value="Genomic_DNA"/>
</dbReference>
<dbReference type="EMBL" id="CP002688">
    <property type="protein sequence ID" value="AED95699.1"/>
    <property type="molecule type" value="Genomic_DNA"/>
</dbReference>
<dbReference type="EMBL" id="BT024473">
    <property type="protein sequence ID" value="ABD19654.1"/>
    <property type="molecule type" value="mRNA"/>
</dbReference>
<dbReference type="EMBL" id="AY085977">
    <property type="protein sequence ID" value="AAM63187.1"/>
    <property type="molecule type" value="mRNA"/>
</dbReference>
<dbReference type="RefSeq" id="NP_199674.1">
    <molecule id="Q9FJK7-1"/>
    <property type="nucleotide sequence ID" value="NM_124239.4"/>
</dbReference>
<dbReference type="SMR" id="Q9FJK7"/>
<dbReference type="BioGRID" id="20166">
    <property type="interactions" value="3"/>
</dbReference>
<dbReference type="FunCoup" id="Q9FJK7">
    <property type="interactions" value="4317"/>
</dbReference>
<dbReference type="IntAct" id="Q9FJK7">
    <property type="interactions" value="1"/>
</dbReference>
<dbReference type="STRING" id="3702.Q9FJK7"/>
<dbReference type="PaxDb" id="3702-AT5G48630.2"/>
<dbReference type="ProteomicsDB" id="223958">
    <molecule id="Q9FJK7-1"/>
</dbReference>
<dbReference type="EnsemblPlants" id="AT5G48630.1">
    <molecule id="Q9FJK7-1"/>
    <property type="protein sequence ID" value="AT5G48630.1"/>
    <property type="gene ID" value="AT5G48630"/>
</dbReference>
<dbReference type="GeneID" id="834920"/>
<dbReference type="Gramene" id="AT5G48630.1">
    <molecule id="Q9FJK7-1"/>
    <property type="protein sequence ID" value="AT5G48630.1"/>
    <property type="gene ID" value="AT5G48630"/>
</dbReference>
<dbReference type="KEGG" id="ath:AT5G48630"/>
<dbReference type="Araport" id="AT5G48630"/>
<dbReference type="TAIR" id="AT5G48630"/>
<dbReference type="eggNOG" id="KOG0794">
    <property type="taxonomic scope" value="Eukaryota"/>
</dbReference>
<dbReference type="HOGENOM" id="CLU_034754_0_0_1"/>
<dbReference type="InParanoid" id="Q9FJK7"/>
<dbReference type="OMA" id="TAVAYMR"/>
<dbReference type="OrthoDB" id="10266018at2759"/>
<dbReference type="PhylomeDB" id="Q9FJK7"/>
<dbReference type="PRO" id="PR:Q9FJK7"/>
<dbReference type="Proteomes" id="UP000006548">
    <property type="component" value="Chromosome 5"/>
</dbReference>
<dbReference type="ExpressionAtlas" id="Q9FJK7">
    <property type="expression patterns" value="baseline and differential"/>
</dbReference>
<dbReference type="GO" id="GO:0016538">
    <property type="term" value="F:cyclin-dependent protein serine/threonine kinase regulator activity"/>
    <property type="evidence" value="ECO:0007669"/>
    <property type="project" value="InterPro"/>
</dbReference>
<dbReference type="GO" id="GO:0051301">
    <property type="term" value="P:cell division"/>
    <property type="evidence" value="ECO:0007669"/>
    <property type="project" value="UniProtKB-KW"/>
</dbReference>
<dbReference type="GO" id="GO:0006357">
    <property type="term" value="P:regulation of transcription by RNA polymerase II"/>
    <property type="evidence" value="ECO:0007669"/>
    <property type="project" value="InterPro"/>
</dbReference>
<dbReference type="CDD" id="cd20571">
    <property type="entry name" value="CYCLIN_AtCycC_rpt1"/>
    <property type="match status" value="1"/>
</dbReference>
<dbReference type="CDD" id="cd20572">
    <property type="entry name" value="CYCLIN_AtCycC_rpt2"/>
    <property type="match status" value="1"/>
</dbReference>
<dbReference type="FunFam" id="1.10.472.10:FF:000058">
    <property type="entry name" value="cyclin-C1-2-like isoform X1"/>
    <property type="match status" value="1"/>
</dbReference>
<dbReference type="Gene3D" id="1.10.472.10">
    <property type="entry name" value="Cyclin-like"/>
    <property type="match status" value="2"/>
</dbReference>
<dbReference type="InterPro" id="IPR013763">
    <property type="entry name" value="Cyclin-like_dom"/>
</dbReference>
<dbReference type="InterPro" id="IPR036915">
    <property type="entry name" value="Cyclin-like_sf"/>
</dbReference>
<dbReference type="InterPro" id="IPR043198">
    <property type="entry name" value="Cyclin/Ssn8"/>
</dbReference>
<dbReference type="InterPro" id="IPR006671">
    <property type="entry name" value="Cyclin_N"/>
</dbReference>
<dbReference type="PANTHER" id="PTHR10026">
    <property type="entry name" value="CYCLIN"/>
    <property type="match status" value="1"/>
</dbReference>
<dbReference type="Pfam" id="PF00134">
    <property type="entry name" value="Cyclin_N"/>
    <property type="match status" value="1"/>
</dbReference>
<dbReference type="PIRSF" id="PIRSF028758">
    <property type="entry name" value="Cyclin, C/H/G types"/>
    <property type="match status" value="1"/>
</dbReference>
<dbReference type="SMART" id="SM00385">
    <property type="entry name" value="CYCLIN"/>
    <property type="match status" value="2"/>
</dbReference>
<dbReference type="SUPFAM" id="SSF47954">
    <property type="entry name" value="Cyclin-like"/>
    <property type="match status" value="2"/>
</dbReference>
<keyword id="KW-0025">Alternative splicing</keyword>
<keyword id="KW-0131">Cell cycle</keyword>
<keyword id="KW-0132">Cell division</keyword>
<keyword id="KW-0195">Cyclin</keyword>
<keyword id="KW-1185">Reference proteome</keyword>
<proteinExistence type="evidence at transcript level"/>
<comment type="alternative products">
    <event type="alternative splicing"/>
    <isoform>
        <id>Q9FJK7-1</id>
        <name>1</name>
        <sequence type="displayed"/>
    </isoform>
    <text>A number of isoforms are produced. According to EST sequences.</text>
</comment>
<comment type="similarity">
    <text evidence="1">Belongs to the cyclin family. Cyclin C subfamily.</text>
</comment>
<accession>Q9FJK7</accession>
<name>CCC12_ARATH</name>
<evidence type="ECO:0000305" key="1"/>
<sequence length="253" mass="29845">MASNFWTSTHYKELKDPEEVNVVHPLDAQRGISVEDFRLIKLHMSNYISKLAQHIKIRQRVVATAVTYMRRVYTRKSLTEYEPRLVAPTCLYLACKAEESVVHAKLLVFYMKKLYADEKFRYEIKDILEMEMKVLEALNFYLVVFHPYRSLPEFLQDSGINDTSMTHLTWGLVNDTYRMDLILIHPPFLITLACIYIASVHKEKDIKTWFEELSVDMNIVKNIAMEILDFYENHRLFTEERVHAAFNKLATNP</sequence>
<gene>
    <name type="primary">CYCC1-2</name>
    <name type="ordered locus">At5g48630</name>
    <name type="ORF">K15N18.10</name>
</gene>
<feature type="chain" id="PRO_0000287019" description="Cyclin-C1-2">
    <location>
        <begin position="1"/>
        <end position="253"/>
    </location>
</feature>
<organism>
    <name type="scientific">Arabidopsis thaliana</name>
    <name type="common">Mouse-ear cress</name>
    <dbReference type="NCBI Taxonomy" id="3702"/>
    <lineage>
        <taxon>Eukaryota</taxon>
        <taxon>Viridiplantae</taxon>
        <taxon>Streptophyta</taxon>
        <taxon>Embryophyta</taxon>
        <taxon>Tracheophyta</taxon>
        <taxon>Spermatophyta</taxon>
        <taxon>Magnoliopsida</taxon>
        <taxon>eudicotyledons</taxon>
        <taxon>Gunneridae</taxon>
        <taxon>Pentapetalae</taxon>
        <taxon>rosids</taxon>
        <taxon>malvids</taxon>
        <taxon>Brassicales</taxon>
        <taxon>Brassicaceae</taxon>
        <taxon>Camelineae</taxon>
        <taxon>Arabidopsis</taxon>
    </lineage>
</organism>
<protein>
    <recommendedName>
        <fullName>Cyclin-C1-2</fullName>
        <shortName>CycC1;2</shortName>
    </recommendedName>
</protein>
<reference key="1">
    <citation type="journal article" date="1998" name="DNA Res.">
        <title>Structural analysis of Arabidopsis thaliana chromosome 5. VII. Sequence features of the regions of 1,013,767 bp covered by sixteen physically assigned P1 and TAC clones.</title>
        <authorList>
            <person name="Nakamura Y."/>
            <person name="Sato S."/>
            <person name="Asamizu E."/>
            <person name="Kaneko T."/>
            <person name="Kotani H."/>
            <person name="Miyajima N."/>
            <person name="Tabata S."/>
        </authorList>
    </citation>
    <scope>NUCLEOTIDE SEQUENCE [LARGE SCALE GENOMIC DNA]</scope>
    <source>
        <strain>cv. Columbia</strain>
    </source>
</reference>
<reference key="2">
    <citation type="journal article" date="2017" name="Plant J.">
        <title>Araport11: a complete reannotation of the Arabidopsis thaliana reference genome.</title>
        <authorList>
            <person name="Cheng C.Y."/>
            <person name="Krishnakumar V."/>
            <person name="Chan A.P."/>
            <person name="Thibaud-Nissen F."/>
            <person name="Schobel S."/>
            <person name="Town C.D."/>
        </authorList>
    </citation>
    <scope>GENOME REANNOTATION</scope>
    <source>
        <strain>cv. Columbia</strain>
    </source>
</reference>
<reference key="3">
    <citation type="submission" date="2006-02" db="EMBL/GenBank/DDBJ databases">
        <title>Arabidopsis ORF clones.</title>
        <authorList>
            <person name="Shinn P."/>
            <person name="Chen H."/>
            <person name="Kim C.J."/>
            <person name="Ecker J.R."/>
        </authorList>
    </citation>
    <scope>NUCLEOTIDE SEQUENCE [LARGE SCALE MRNA]</scope>
    <source>
        <strain>cv. Columbia</strain>
    </source>
</reference>
<reference key="4">
    <citation type="submission" date="2002-03" db="EMBL/GenBank/DDBJ databases">
        <title>Full-length cDNA from Arabidopsis thaliana.</title>
        <authorList>
            <person name="Brover V.V."/>
            <person name="Troukhan M.E."/>
            <person name="Alexandrov N.A."/>
            <person name="Lu Y.-P."/>
            <person name="Flavell R.B."/>
            <person name="Feldmann K.A."/>
        </authorList>
    </citation>
    <scope>NUCLEOTIDE SEQUENCE [LARGE SCALE MRNA]</scope>
</reference>
<reference key="5">
    <citation type="journal article" date="2004" name="Plant Physiol.">
        <title>Genome-wide analysis of the cyclin family in Arabidopsis and comparative phylogenetic analysis of plant cyclin-like proteins.</title>
        <authorList>
            <person name="Wang G."/>
            <person name="Kong H."/>
            <person name="Sun Y."/>
            <person name="Zhang X."/>
            <person name="Zhang W."/>
            <person name="Altman N."/>
            <person name="dePamphilis C.W."/>
            <person name="Ma H."/>
        </authorList>
    </citation>
    <scope>GENE FAMILY</scope>
    <scope>NOMENCLATURE</scope>
</reference>